<proteinExistence type="inferred from homology"/>
<feature type="chain" id="PRO_0000343756" description="Protein Ycf2">
    <location>
        <begin position="1"/>
        <end position="2289"/>
    </location>
</feature>
<feature type="binding site" evidence="1">
    <location>
        <begin position="1643"/>
        <end position="1650"/>
    </location>
    <ligand>
        <name>ATP</name>
        <dbReference type="ChEBI" id="CHEBI:30616"/>
    </ligand>
</feature>
<dbReference type="EMBL" id="AP009367">
    <property type="protein sequence ID" value="BAF49897.1"/>
    <property type="molecule type" value="Genomic_DNA"/>
</dbReference>
<dbReference type="EMBL" id="AP009367">
    <property type="protein sequence ID" value="BAF49916.1"/>
    <property type="molecule type" value="Genomic_DNA"/>
</dbReference>
<dbReference type="GO" id="GO:0009570">
    <property type="term" value="C:chloroplast stroma"/>
    <property type="evidence" value="ECO:0007669"/>
    <property type="project" value="UniProtKB-SubCell"/>
</dbReference>
<dbReference type="GO" id="GO:0005524">
    <property type="term" value="F:ATP binding"/>
    <property type="evidence" value="ECO:0007669"/>
    <property type="project" value="UniProtKB-KW"/>
</dbReference>
<dbReference type="GO" id="GO:0016887">
    <property type="term" value="F:ATP hydrolysis activity"/>
    <property type="evidence" value="ECO:0007669"/>
    <property type="project" value="InterPro"/>
</dbReference>
<dbReference type="CDD" id="cd19505">
    <property type="entry name" value="RecA-like_Ycf2"/>
    <property type="match status" value="1"/>
</dbReference>
<dbReference type="Gene3D" id="3.40.50.300">
    <property type="entry name" value="P-loop containing nucleotide triphosphate hydrolases"/>
    <property type="match status" value="1"/>
</dbReference>
<dbReference type="HAMAP" id="MF_01330">
    <property type="entry name" value="Ycf2"/>
    <property type="match status" value="1"/>
</dbReference>
<dbReference type="InterPro" id="IPR003593">
    <property type="entry name" value="AAA+_ATPase"/>
</dbReference>
<dbReference type="InterPro" id="IPR003959">
    <property type="entry name" value="ATPase_AAA_core"/>
</dbReference>
<dbReference type="InterPro" id="IPR027417">
    <property type="entry name" value="P-loop_NTPase"/>
</dbReference>
<dbReference type="InterPro" id="IPR008543">
    <property type="entry name" value="Uncharacterised_Ycf2"/>
</dbReference>
<dbReference type="InterPro" id="IPR056777">
    <property type="entry name" value="Ycf2_N"/>
</dbReference>
<dbReference type="PANTHER" id="PTHR33078:SF100">
    <property type="entry name" value="PROTEIN YCF2"/>
    <property type="match status" value="1"/>
</dbReference>
<dbReference type="PANTHER" id="PTHR33078">
    <property type="entry name" value="PROTEIN YCF2-RELATED"/>
    <property type="match status" value="1"/>
</dbReference>
<dbReference type="Pfam" id="PF00004">
    <property type="entry name" value="AAA"/>
    <property type="match status" value="1"/>
</dbReference>
<dbReference type="Pfam" id="PF05695">
    <property type="entry name" value="Ycf2"/>
    <property type="match status" value="1"/>
</dbReference>
<dbReference type="SMART" id="SM00382">
    <property type="entry name" value="AAA"/>
    <property type="match status" value="1"/>
</dbReference>
<dbReference type="SUPFAM" id="SSF52540">
    <property type="entry name" value="P-loop containing nucleoside triphosphate hydrolases"/>
    <property type="match status" value="1"/>
</dbReference>
<name>YCF2_AETGR</name>
<gene>
    <name evidence="1" type="primary">ycf2-A</name>
</gene>
<gene>
    <name evidence="1" type="primary">ycf2-B</name>
</gene>
<geneLocation type="chloroplast"/>
<reference key="1">
    <citation type="submission" date="2007-03" db="EMBL/GenBank/DDBJ databases">
        <title>Sequencing analysis of Aethionema grandiflorum chloroplast DNA.</title>
        <authorList>
            <person name="Hosouchi T."/>
            <person name="Tsuruoka H."/>
            <person name="Kotani H."/>
        </authorList>
    </citation>
    <scope>NUCLEOTIDE SEQUENCE [LARGE SCALE GENOMIC DNA]</scope>
</reference>
<protein>
    <recommendedName>
        <fullName evidence="1">Protein Ycf2</fullName>
    </recommendedName>
</protein>
<sequence>MKGHQFKSWIFELREIVREIKNSHYFLDSWTQFNSVGSFIHIFFHQERFRKLLDPRIWSILLSRNSQGSTSNRYFTIKSVVLFVVAALLYRINNRNMVESKNLYLKGLLPIPMNSIGPRNDTSEESFGSSNINRLILSLLYLTKGKKISESSFRDPKESTWVLPITQKCIMPESNWSSRWWRNWIGKKRDFCCKISNETVAGIDISFKEKDIKYLEFLFVYYMDDPIRKGHDWELFDRLSPSKRRNIINLNSGQLFEILVKDWICYLMFAFREKIPIEVEGFFKQQGAGSTIQSNDIEHVSHLFSRNKWAISLQNCAQFNMWQFHQDLFVSWGKNPHESDFLRKISRENWIWLDNVWLVNKDRFFSKVRNVSSNIQYDSTRSSFVQVTDSSQLKGSSDQFIDHFDSISNEDSEYHTLINQREIQQLKERSILWDPSFIQTEGREIESDRFPKYLSGYSSMPRLFTEREKRMNNHLLPEESEEFIGNPTRPIRSFFSDRWSELHLGSNPTERSTRDQKLLKKEQDVSFVPSRRSENKEIVNIFKIITYLQNNVSIHPISSDLGCDMVPKDELDMDSSNKISFLNKNPFFDLFHLFHERKRGGYTLRHDFESEERFQEMADLFTLSITEPDLVYHKGFAFSIDSYGLDQRQFLKEVFNSRDESKKKSLLVLPPIFYEENESFYRRIRQNWVRISCGNDLEDPKQKRVVFASNNIMEAVNQYRLIRNLIQIQFQYSPYGYIRNVLNRFFLMKRPDRNFEYGIQRDQIGNDTLNHRTIMKDTINQHLSNLKKSQKKGFDPLIFLSRTERSINRDPNAYRYKWSNGSKNFQEHLEHFVSERKSRFQVVFDRLCINQYSIDWSEVIDQKDLSKSLRFFLSKLLRFFLSKLLLFLSNSLPFFFVSFENIPIHRSEIHIYELKGPNDQLCNQLLESIGLQIVHLKKLKPFLLDDHNTSQKSKFLINGGTISPFLFNKIPKWMIDSFHTRKNRRKSFDNTDSYFSMVSHDQDNWLNPVKPFQRSSLISSFSKANRLRFLNNPHHFCFYCNKRFPFYVEKARLNNYDFTYGQFLTILFIRNKIFSSCGGKKKHAFLERDTISPSPIESQVSNIFISKDFPQSGDERYNLYKSFHFPIRSDPLVRRAIYSIADISGTPLIEGQRVNFERTYCQTLSDMNLSDSEEKSLHQYLNFNSNMGLIHTPCSEKYLPSEKRKKWSLCLKKCVDKGQMDRTFQRDSAFSTLSKWNLFQTYMPWFFTSTGYKYLNLIFLDTFSDLLRILSSSPKFVSIFHDIMHGLDISWRILQKKWCLPQRNLISEISSKSLHNLLLSEEMIHRNNESSLISTHLRSPNVREVLYSILFLLLVAGYIVRTHLLFVSRAYSELQTEFEKIKSLMIPSYMIELRKLLDRYPTSELNSFWLKNLFLVALEQLGDCLEEIRGSGGNMLWGGDPAYGVKSIRSKKKDLNINFIDIIDLISIIPNPINRITFSRNTRHLSHTSKEIYSLIRKRKNVSGDWIDDKIESWVANSDSIDDKEREFLVQFSTLRAEKRIDQILLSLTHSDHLSKNESGYQMIEQPGTIYLRYLVDIHKKYLMNYEFNTSCLAERRIFLAHYQTITYSQTSCGANSFHFPSHGKPFSLRLALSPSRSILVIGSIGTGRSYLVKYLATTSYVPFITVFLNKFLDNKPKGFFIDDIDIDDSDDIDASNDIDRELDTELELLTMMNALTMDMMSEIDRFYITLQFELAKAMSPCIIWIPNIHDLDVNESNYLALGLLVNSLSRDCERCSTRNILVIASTHIPQKVDPALIAPNKLNTCIKIRRLLIPQQRKHFFTLSYTRGFHLEKKMFHTNGFESITMGSSARDLVALTNEALSISITQKKSIIDTNTIRSALHRQTWDLRSQVRSVQDHGILFYQIGRAVAQNVLISNCPIDPISIYMKKKSCNEGDSYLYKWYFELGTSMKKFTILLYLLSCSAGSVTQDLWSLPGPDEKNRITSYGFVENDSDLVHGLLEVQGALVGSSRTEKDCSQFDNDRVTLLFRSEPRNPLYMMQNGSCSIVDQRFLYEKYESEFEEGEGEGVLDPQQIEEDLFNHIVWAPRIWRPRGFLFDCIERPNELGFPYLAGSFRGKRIIYDEKYELQENDSEFLQSGTMQYQRRDRSSKEQGFFRISQFIWDPADPLFFLFKDQPFVSVFSHREFFADEEMSKGLFTSQTDPPTSIYKRWFIKNTQEKHFELLIQRQRWLRTNSSLSNGFFRSNTLSESYQYLSNLFLSNGTLLDRMTKTLLKKRWLFPDEMKIGFM</sequence>
<organism>
    <name type="scientific">Aethionema grandiflorum</name>
    <name type="common">Persian stone-cress</name>
    <dbReference type="NCBI Taxonomy" id="72657"/>
    <lineage>
        <taxon>Eukaryota</taxon>
        <taxon>Viridiplantae</taxon>
        <taxon>Streptophyta</taxon>
        <taxon>Embryophyta</taxon>
        <taxon>Tracheophyta</taxon>
        <taxon>Spermatophyta</taxon>
        <taxon>Magnoliopsida</taxon>
        <taxon>eudicotyledons</taxon>
        <taxon>Gunneridae</taxon>
        <taxon>Pentapetalae</taxon>
        <taxon>rosids</taxon>
        <taxon>malvids</taxon>
        <taxon>Brassicales</taxon>
        <taxon>Brassicaceae</taxon>
        <taxon>Aethionemeae</taxon>
        <taxon>Aethionema</taxon>
    </lineage>
</organism>
<evidence type="ECO:0000255" key="1">
    <source>
        <dbReference type="HAMAP-Rule" id="MF_01330"/>
    </source>
</evidence>
<accession>A4QJP2</accession>
<keyword id="KW-0067">ATP-binding</keyword>
<keyword id="KW-0150">Chloroplast</keyword>
<keyword id="KW-0547">Nucleotide-binding</keyword>
<keyword id="KW-0934">Plastid</keyword>
<comment type="function">
    <text evidence="1">Probable ATPase of unknown function. Its presence in a non-photosynthetic plant (Epifagus virginiana) and experiments in tobacco indicate that it has an essential function which is probably not related to photosynthesis.</text>
</comment>
<comment type="subcellular location">
    <subcellularLocation>
        <location evidence="1">Plastid</location>
        <location evidence="1">Chloroplast stroma</location>
    </subcellularLocation>
</comment>
<comment type="similarity">
    <text evidence="1">Belongs to the Ycf2 family.</text>
</comment>